<name>EV675_IXORI</name>
<keyword id="KW-1015">Disulfide bond</keyword>
<keyword id="KW-0325">Glycoprotein</keyword>
<keyword id="KW-0964">Secreted</keyword>
<keyword id="KW-0732">Signal</keyword>
<proteinExistence type="inferred from homology"/>
<reference evidence="7" key="1">
    <citation type="journal article" date="2013" name="FASEB J.">
        <title>De novo Ixodes ricinus salivary gland transcriptome analysis using two next-generation sequencing methodologies.</title>
        <authorList>
            <person name="Schwarz A."/>
            <person name="von Reumont B.M."/>
            <person name="Erhart J."/>
            <person name="Chagas A.C."/>
            <person name="Ribeiro J.M."/>
            <person name="Kotsyfakis M."/>
        </authorList>
    </citation>
    <scope>NUCLEOTIDE SEQUENCE [LARGE SCALE MRNA]</scope>
    <source>
        <tissue evidence="7">Salivary gland</tissue>
    </source>
</reference>
<reference evidence="6" key="2">
    <citation type="journal article" date="2019" name="J. Biol. Chem.">
        <title>A knottin scaffold directs the CXC-chemokine-binding specificity of tick evasins.</title>
        <authorList>
            <person name="Lee A.W."/>
            <person name="Deruaz M."/>
            <person name="Lynch C."/>
            <person name="Davies G."/>
            <person name="Singh K."/>
            <person name="Alenazi Y."/>
            <person name="Eaton J.R.O."/>
            <person name="Kawamura A."/>
            <person name="Shaw J."/>
            <person name="Proudfoot A.E.I."/>
            <person name="Dias J.M."/>
            <person name="Bhattacharya S."/>
        </authorList>
    </citation>
    <scope>FUNCTION</scope>
</reference>
<accession>A0A0K8R374</accession>
<organism evidence="7">
    <name type="scientific">Ixodes ricinus</name>
    <name type="common">Common tick</name>
    <name type="synonym">Acarus ricinus</name>
    <dbReference type="NCBI Taxonomy" id="34613"/>
    <lineage>
        <taxon>Eukaryota</taxon>
        <taxon>Metazoa</taxon>
        <taxon>Ecdysozoa</taxon>
        <taxon>Arthropoda</taxon>
        <taxon>Chelicerata</taxon>
        <taxon>Arachnida</taxon>
        <taxon>Acari</taxon>
        <taxon>Parasitiformes</taxon>
        <taxon>Ixodida</taxon>
        <taxon>Ixodoidea</taxon>
        <taxon>Ixodidae</taxon>
        <taxon>Ixodinae</taxon>
        <taxon>Ixodes</taxon>
    </lineage>
</organism>
<protein>
    <recommendedName>
        <fullName evidence="5">Evasin P675</fullName>
    </recommendedName>
</protein>
<dbReference type="EMBL" id="GADI01008520">
    <property type="protein sequence ID" value="JAA65288.1"/>
    <property type="molecule type" value="mRNA"/>
</dbReference>
<dbReference type="SMR" id="A0A0K8R374"/>
<dbReference type="GO" id="GO:0005576">
    <property type="term" value="C:extracellular region"/>
    <property type="evidence" value="ECO:0007669"/>
    <property type="project" value="UniProtKB-SubCell"/>
</dbReference>
<dbReference type="GO" id="GO:0019958">
    <property type="term" value="F:C-X-C chemokine binding"/>
    <property type="evidence" value="ECO:0000314"/>
    <property type="project" value="UniProtKB"/>
</dbReference>
<sequence>MEVKTFAFLQIAVIIALGLHLAPAGSNQLSGPQSSANSNDAVFCDTNCTQGTDGAWSGCRGDCFCVHVGNSTEGRCIELIGDFDYSTPGAED</sequence>
<comment type="function">
    <text evidence="4">Salivary chemokine-binding protein which binds to host chemokines CXCL1, CXCL2, CXCL3, CXCL4, CXCL5, CXCL6, CXCL10, CXCL11 and CXCL13.</text>
</comment>
<comment type="subcellular location">
    <subcellularLocation>
        <location evidence="6">Secreted</location>
    </subcellularLocation>
</comment>
<evidence type="ECO:0000250" key="1">
    <source>
        <dbReference type="UniProtKB" id="P0C8E8"/>
    </source>
</evidence>
<evidence type="ECO:0000255" key="2"/>
<evidence type="ECO:0000255" key="3">
    <source>
        <dbReference type="PROSITE-ProRule" id="PRU00498"/>
    </source>
</evidence>
<evidence type="ECO:0000269" key="4">
    <source>
    </source>
</evidence>
<evidence type="ECO:0000303" key="5">
    <source>
    </source>
</evidence>
<evidence type="ECO:0000305" key="6"/>
<evidence type="ECO:0000312" key="7">
    <source>
        <dbReference type="EMBL" id="JAA65288.1"/>
    </source>
</evidence>
<feature type="signal peptide" evidence="2">
    <location>
        <begin position="1"/>
        <end position="24"/>
    </location>
</feature>
<feature type="chain" id="PRO_5005515753" description="Evasin P675" evidence="2">
    <location>
        <begin position="25"/>
        <end position="92"/>
    </location>
</feature>
<feature type="glycosylation site" description="N-linked (GlcNAc...) asparagine" evidence="3">
    <location>
        <position position="47"/>
    </location>
</feature>
<feature type="glycosylation site" description="N-linked (GlcNAc...) asparagine" evidence="3">
    <location>
        <position position="70"/>
    </location>
</feature>
<feature type="disulfide bond" evidence="1">
    <location>
        <begin position="44"/>
        <end position="63"/>
    </location>
</feature>
<feature type="disulfide bond" evidence="1">
    <location>
        <begin position="48"/>
        <end position="65"/>
    </location>
</feature>
<feature type="disulfide bond" evidence="1">
    <location>
        <begin position="59"/>
        <end position="76"/>
    </location>
</feature>